<evidence type="ECO:0000255" key="1">
    <source>
        <dbReference type="HAMAP-Rule" id="MF_00270"/>
    </source>
</evidence>
<evidence type="ECO:0000305" key="2"/>
<reference key="1">
    <citation type="journal article" date="2003" name="Nucleic Acids Res.">
        <title>Genome sequence of Chlamydophila caviae (Chlamydia psittaci GPIC): examining the role of niche-specific genes in the evolution of the Chlamydiaceae.</title>
        <authorList>
            <person name="Read T.D."/>
            <person name="Myers G.S.A."/>
            <person name="Brunham R.C."/>
            <person name="Nelson W.C."/>
            <person name="Paulsen I.T."/>
            <person name="Heidelberg J.F."/>
            <person name="Holtzapple E.K."/>
            <person name="Khouri H.M."/>
            <person name="Federova N.B."/>
            <person name="Carty H.A."/>
            <person name="Umayam L.A."/>
            <person name="Haft D.H."/>
            <person name="Peterson J.D."/>
            <person name="Beanan M.J."/>
            <person name="White O."/>
            <person name="Salzberg S.L."/>
            <person name="Hsia R.-C."/>
            <person name="McClarty G."/>
            <person name="Rank R.G."/>
            <person name="Bavoil P.M."/>
            <person name="Fraser C.M."/>
        </authorList>
    </citation>
    <scope>NUCLEOTIDE SEQUENCE [LARGE SCALE GENOMIC DNA]</scope>
    <source>
        <strain>ATCC VR-813 / DSM 19441 / 03DC25 / GPIC</strain>
    </source>
</reference>
<protein>
    <recommendedName>
        <fullName evidence="1">Small ribosomal subunit protein bS18</fullName>
    </recommendedName>
    <alternativeName>
        <fullName evidence="2">30S ribosomal protein S18</fullName>
    </alternativeName>
</protein>
<accession>Q821W8</accession>
<name>RS18_CHLCV</name>
<feature type="chain" id="PRO_0000111138" description="Small ribosomal subunit protein bS18">
    <location>
        <begin position="1"/>
        <end position="82"/>
    </location>
</feature>
<gene>
    <name evidence="1" type="primary">rpsR</name>
    <name type="ordered locus">CCA_00817</name>
</gene>
<proteinExistence type="inferred from homology"/>
<organism>
    <name type="scientific">Chlamydia caviae (strain ATCC VR-813 / DSM 19441 / 03DC25 / GPIC)</name>
    <name type="common">Chlamydophila caviae</name>
    <dbReference type="NCBI Taxonomy" id="227941"/>
    <lineage>
        <taxon>Bacteria</taxon>
        <taxon>Pseudomonadati</taxon>
        <taxon>Chlamydiota</taxon>
        <taxon>Chlamydiia</taxon>
        <taxon>Chlamydiales</taxon>
        <taxon>Chlamydiaceae</taxon>
        <taxon>Chlamydia/Chlamydophila group</taxon>
        <taxon>Chlamydia</taxon>
    </lineage>
</organism>
<keyword id="KW-0687">Ribonucleoprotein</keyword>
<keyword id="KW-0689">Ribosomal protein</keyword>
<keyword id="KW-0694">RNA-binding</keyword>
<keyword id="KW-0699">rRNA-binding</keyword>
<comment type="function">
    <text evidence="1">Binds as a heterodimer with protein bS6 to the central domain of the 16S rRNA, where it helps stabilize the platform of the 30S subunit.</text>
</comment>
<comment type="subunit">
    <text evidence="1">Part of the 30S ribosomal subunit. Forms a tight heterodimer with protein bS6.</text>
</comment>
<comment type="similarity">
    <text evidence="1">Belongs to the bacterial ribosomal protein bS18 family.</text>
</comment>
<dbReference type="EMBL" id="AE015925">
    <property type="protein sequence ID" value="AAP05558.1"/>
    <property type="molecule type" value="Genomic_DNA"/>
</dbReference>
<dbReference type="RefSeq" id="WP_011006772.1">
    <property type="nucleotide sequence ID" value="NC_003361.3"/>
</dbReference>
<dbReference type="SMR" id="Q821W8"/>
<dbReference type="STRING" id="227941.CCA_00817"/>
<dbReference type="KEGG" id="cca:CCA_00817"/>
<dbReference type="eggNOG" id="COG0238">
    <property type="taxonomic scope" value="Bacteria"/>
</dbReference>
<dbReference type="HOGENOM" id="CLU_148710_2_2_0"/>
<dbReference type="OrthoDB" id="9812008at2"/>
<dbReference type="Proteomes" id="UP000002193">
    <property type="component" value="Chromosome"/>
</dbReference>
<dbReference type="GO" id="GO:0022627">
    <property type="term" value="C:cytosolic small ribosomal subunit"/>
    <property type="evidence" value="ECO:0007669"/>
    <property type="project" value="TreeGrafter"/>
</dbReference>
<dbReference type="GO" id="GO:0070181">
    <property type="term" value="F:small ribosomal subunit rRNA binding"/>
    <property type="evidence" value="ECO:0007669"/>
    <property type="project" value="TreeGrafter"/>
</dbReference>
<dbReference type="GO" id="GO:0003735">
    <property type="term" value="F:structural constituent of ribosome"/>
    <property type="evidence" value="ECO:0007669"/>
    <property type="project" value="InterPro"/>
</dbReference>
<dbReference type="GO" id="GO:0006412">
    <property type="term" value="P:translation"/>
    <property type="evidence" value="ECO:0007669"/>
    <property type="project" value="UniProtKB-UniRule"/>
</dbReference>
<dbReference type="Gene3D" id="4.10.640.10">
    <property type="entry name" value="Ribosomal protein S18"/>
    <property type="match status" value="1"/>
</dbReference>
<dbReference type="HAMAP" id="MF_00270">
    <property type="entry name" value="Ribosomal_bS18"/>
    <property type="match status" value="1"/>
</dbReference>
<dbReference type="InterPro" id="IPR001648">
    <property type="entry name" value="Ribosomal_bS18"/>
</dbReference>
<dbReference type="InterPro" id="IPR018275">
    <property type="entry name" value="Ribosomal_bS18_CS"/>
</dbReference>
<dbReference type="InterPro" id="IPR036870">
    <property type="entry name" value="Ribosomal_bS18_sf"/>
</dbReference>
<dbReference type="NCBIfam" id="TIGR00165">
    <property type="entry name" value="S18"/>
    <property type="match status" value="1"/>
</dbReference>
<dbReference type="PANTHER" id="PTHR13479">
    <property type="entry name" value="30S RIBOSOMAL PROTEIN S18"/>
    <property type="match status" value="1"/>
</dbReference>
<dbReference type="PANTHER" id="PTHR13479:SF40">
    <property type="entry name" value="SMALL RIBOSOMAL SUBUNIT PROTEIN BS18M"/>
    <property type="match status" value="1"/>
</dbReference>
<dbReference type="Pfam" id="PF01084">
    <property type="entry name" value="Ribosomal_S18"/>
    <property type="match status" value="1"/>
</dbReference>
<dbReference type="PRINTS" id="PR00974">
    <property type="entry name" value="RIBOSOMALS18"/>
</dbReference>
<dbReference type="SUPFAM" id="SSF46911">
    <property type="entry name" value="Ribosomal protein S18"/>
    <property type="match status" value="1"/>
</dbReference>
<dbReference type="PROSITE" id="PS00057">
    <property type="entry name" value="RIBOSOMAL_S18"/>
    <property type="match status" value="1"/>
</dbReference>
<sequence>MNKPVHNNEHRRKRFNKKCPFVSAGWKTIDYKDTETLKKFITERGKILPRRITGVSSRFQGTLTLAIKRARHIGLLPFVAED</sequence>